<evidence type="ECO:0000255" key="1">
    <source>
        <dbReference type="HAMAP-Rule" id="MF_00607"/>
    </source>
</evidence>
<accession>P59156</accession>
<name>RSMA_STRMU</name>
<feature type="chain" id="PRO_0000101615" description="Ribosomal RNA small subunit methyltransferase A">
    <location>
        <begin position="1"/>
        <end position="291"/>
    </location>
</feature>
<feature type="binding site" evidence="1">
    <location>
        <position position="27"/>
    </location>
    <ligand>
        <name>S-adenosyl-L-methionine</name>
        <dbReference type="ChEBI" id="CHEBI:59789"/>
    </ligand>
</feature>
<feature type="binding site" evidence="1">
    <location>
        <position position="29"/>
    </location>
    <ligand>
        <name>S-adenosyl-L-methionine</name>
        <dbReference type="ChEBI" id="CHEBI:59789"/>
    </ligand>
</feature>
<feature type="binding site" evidence="1">
    <location>
        <position position="54"/>
    </location>
    <ligand>
        <name>S-adenosyl-L-methionine</name>
        <dbReference type="ChEBI" id="CHEBI:59789"/>
    </ligand>
</feature>
<feature type="binding site" evidence="1">
    <location>
        <position position="75"/>
    </location>
    <ligand>
        <name>S-adenosyl-L-methionine</name>
        <dbReference type="ChEBI" id="CHEBI:59789"/>
    </ligand>
</feature>
<feature type="binding site" evidence="1">
    <location>
        <position position="100"/>
    </location>
    <ligand>
        <name>S-adenosyl-L-methionine</name>
        <dbReference type="ChEBI" id="CHEBI:59789"/>
    </ligand>
</feature>
<feature type="binding site" evidence="1">
    <location>
        <position position="125"/>
    </location>
    <ligand>
        <name>S-adenosyl-L-methionine</name>
        <dbReference type="ChEBI" id="CHEBI:59789"/>
    </ligand>
</feature>
<dbReference type="EC" id="2.1.1.182" evidence="1"/>
<dbReference type="EMBL" id="AE014133">
    <property type="protein sequence ID" value="AAN58107.1"/>
    <property type="molecule type" value="Genomic_DNA"/>
</dbReference>
<dbReference type="RefSeq" id="NP_720801.1">
    <property type="nucleotide sequence ID" value="NC_004350.2"/>
</dbReference>
<dbReference type="RefSeq" id="WP_002279637.1">
    <property type="nucleotide sequence ID" value="NC_004350.2"/>
</dbReference>
<dbReference type="SMR" id="P59156"/>
<dbReference type="STRING" id="210007.SMU_349"/>
<dbReference type="KEGG" id="smu:SMU_349"/>
<dbReference type="PATRIC" id="fig|210007.7.peg.303"/>
<dbReference type="eggNOG" id="COG0030">
    <property type="taxonomic scope" value="Bacteria"/>
</dbReference>
<dbReference type="HOGENOM" id="CLU_041220_0_0_9"/>
<dbReference type="OrthoDB" id="9814755at2"/>
<dbReference type="PhylomeDB" id="P59156"/>
<dbReference type="Proteomes" id="UP000002512">
    <property type="component" value="Chromosome"/>
</dbReference>
<dbReference type="GO" id="GO:0005829">
    <property type="term" value="C:cytosol"/>
    <property type="evidence" value="ECO:0007669"/>
    <property type="project" value="TreeGrafter"/>
</dbReference>
<dbReference type="GO" id="GO:0052908">
    <property type="term" value="F:16S rRNA (adenine(1518)-N(6)/adenine(1519)-N(6))-dimethyltransferase activity"/>
    <property type="evidence" value="ECO:0007669"/>
    <property type="project" value="UniProtKB-EC"/>
</dbReference>
<dbReference type="GO" id="GO:0003723">
    <property type="term" value="F:RNA binding"/>
    <property type="evidence" value="ECO:0007669"/>
    <property type="project" value="UniProtKB-KW"/>
</dbReference>
<dbReference type="CDD" id="cd02440">
    <property type="entry name" value="AdoMet_MTases"/>
    <property type="match status" value="1"/>
</dbReference>
<dbReference type="FunFam" id="3.40.50.150:FF:000023">
    <property type="entry name" value="Ribosomal RNA small subunit methyltransferase A"/>
    <property type="match status" value="1"/>
</dbReference>
<dbReference type="Gene3D" id="1.10.8.100">
    <property type="entry name" value="Ribosomal RNA adenine dimethylase-like, domain 2"/>
    <property type="match status" value="1"/>
</dbReference>
<dbReference type="Gene3D" id="3.40.50.150">
    <property type="entry name" value="Vaccinia Virus protein VP39"/>
    <property type="match status" value="1"/>
</dbReference>
<dbReference type="HAMAP" id="MF_00607">
    <property type="entry name" value="16SrRNA_methyltr_A"/>
    <property type="match status" value="1"/>
</dbReference>
<dbReference type="InterPro" id="IPR001737">
    <property type="entry name" value="KsgA/Erm"/>
</dbReference>
<dbReference type="InterPro" id="IPR023165">
    <property type="entry name" value="rRNA_Ade_diMease-like_C"/>
</dbReference>
<dbReference type="InterPro" id="IPR020596">
    <property type="entry name" value="rRNA_Ade_Mease_Trfase_CS"/>
</dbReference>
<dbReference type="InterPro" id="IPR020598">
    <property type="entry name" value="rRNA_Ade_methylase_Trfase_N"/>
</dbReference>
<dbReference type="InterPro" id="IPR011530">
    <property type="entry name" value="rRNA_adenine_dimethylase"/>
</dbReference>
<dbReference type="InterPro" id="IPR029063">
    <property type="entry name" value="SAM-dependent_MTases_sf"/>
</dbReference>
<dbReference type="NCBIfam" id="TIGR00755">
    <property type="entry name" value="ksgA"/>
    <property type="match status" value="1"/>
</dbReference>
<dbReference type="PANTHER" id="PTHR11727">
    <property type="entry name" value="DIMETHYLADENOSINE TRANSFERASE"/>
    <property type="match status" value="1"/>
</dbReference>
<dbReference type="PANTHER" id="PTHR11727:SF7">
    <property type="entry name" value="DIMETHYLADENOSINE TRANSFERASE-RELATED"/>
    <property type="match status" value="1"/>
</dbReference>
<dbReference type="Pfam" id="PF00398">
    <property type="entry name" value="RrnaAD"/>
    <property type="match status" value="1"/>
</dbReference>
<dbReference type="SMART" id="SM00650">
    <property type="entry name" value="rADc"/>
    <property type="match status" value="1"/>
</dbReference>
<dbReference type="SUPFAM" id="SSF53335">
    <property type="entry name" value="S-adenosyl-L-methionine-dependent methyltransferases"/>
    <property type="match status" value="1"/>
</dbReference>
<dbReference type="PROSITE" id="PS01131">
    <property type="entry name" value="RRNA_A_DIMETH"/>
    <property type="match status" value="1"/>
</dbReference>
<dbReference type="PROSITE" id="PS51689">
    <property type="entry name" value="SAM_RNA_A_N6_MT"/>
    <property type="match status" value="1"/>
</dbReference>
<proteinExistence type="inferred from homology"/>
<reference key="1">
    <citation type="journal article" date="2002" name="Proc. Natl. Acad. Sci. U.S.A.">
        <title>Genome sequence of Streptococcus mutans UA159, a cariogenic dental pathogen.</title>
        <authorList>
            <person name="Ajdic D.J."/>
            <person name="McShan W.M."/>
            <person name="McLaughlin R.E."/>
            <person name="Savic G."/>
            <person name="Chang J."/>
            <person name="Carson M.B."/>
            <person name="Primeaux C."/>
            <person name="Tian R."/>
            <person name="Kenton S."/>
            <person name="Jia H.G."/>
            <person name="Lin S.P."/>
            <person name="Qian Y."/>
            <person name="Li S."/>
            <person name="Zhu H."/>
            <person name="Najar F.Z."/>
            <person name="Lai H."/>
            <person name="White J."/>
            <person name="Roe B.A."/>
            <person name="Ferretti J.J."/>
        </authorList>
    </citation>
    <scope>NUCLEOTIDE SEQUENCE [LARGE SCALE GENOMIC DNA]</scope>
    <source>
        <strain>ATCC 700610 / UA159</strain>
    </source>
</reference>
<protein>
    <recommendedName>
        <fullName evidence="1">Ribosomal RNA small subunit methyltransferase A</fullName>
        <ecNumber evidence="1">2.1.1.182</ecNumber>
    </recommendedName>
    <alternativeName>
        <fullName evidence="1">16S rRNA (adenine(1518)-N(6)/adenine(1519)-N(6))-dimethyltransferase</fullName>
    </alternativeName>
    <alternativeName>
        <fullName evidence="1">16S rRNA dimethyladenosine transferase</fullName>
    </alternativeName>
    <alternativeName>
        <fullName evidence="1">16S rRNA dimethylase</fullName>
    </alternativeName>
    <alternativeName>
        <fullName evidence="1">S-adenosylmethionine-6-N', N'-adenosyl(rRNA) dimethyltransferase</fullName>
    </alternativeName>
</protein>
<comment type="function">
    <text evidence="1">Specifically dimethylates two adjacent adenosines (A1518 and A1519) in the loop of a conserved hairpin near the 3'-end of 16S rRNA in the 30S particle. May play a critical role in biogenesis of 30S subunits.</text>
</comment>
<comment type="catalytic activity">
    <reaction evidence="1">
        <text>adenosine(1518)/adenosine(1519) in 16S rRNA + 4 S-adenosyl-L-methionine = N(6)-dimethyladenosine(1518)/N(6)-dimethyladenosine(1519) in 16S rRNA + 4 S-adenosyl-L-homocysteine + 4 H(+)</text>
        <dbReference type="Rhea" id="RHEA:19609"/>
        <dbReference type="Rhea" id="RHEA-COMP:10232"/>
        <dbReference type="Rhea" id="RHEA-COMP:10233"/>
        <dbReference type="ChEBI" id="CHEBI:15378"/>
        <dbReference type="ChEBI" id="CHEBI:57856"/>
        <dbReference type="ChEBI" id="CHEBI:59789"/>
        <dbReference type="ChEBI" id="CHEBI:74411"/>
        <dbReference type="ChEBI" id="CHEBI:74493"/>
        <dbReference type="EC" id="2.1.1.182"/>
    </reaction>
</comment>
<comment type="subcellular location">
    <subcellularLocation>
        <location evidence="1">Cytoplasm</location>
    </subcellularLocation>
</comment>
<comment type="similarity">
    <text evidence="1">Belongs to the class I-like SAM-binding methyltransferase superfamily. rRNA adenine N(6)-methyltransferase family. RsmA subfamily.</text>
</comment>
<gene>
    <name evidence="1" type="primary">rsmA</name>
    <name evidence="1" type="synonym">ksgA</name>
    <name type="ordered locus">SMU_349</name>
</gene>
<keyword id="KW-0963">Cytoplasm</keyword>
<keyword id="KW-0489">Methyltransferase</keyword>
<keyword id="KW-1185">Reference proteome</keyword>
<keyword id="KW-0694">RNA-binding</keyword>
<keyword id="KW-0698">rRNA processing</keyword>
<keyword id="KW-0949">S-adenosyl-L-methionine</keyword>
<keyword id="KW-0808">Transferase</keyword>
<organism>
    <name type="scientific">Streptococcus mutans serotype c (strain ATCC 700610 / UA159)</name>
    <dbReference type="NCBI Taxonomy" id="210007"/>
    <lineage>
        <taxon>Bacteria</taxon>
        <taxon>Bacillati</taxon>
        <taxon>Bacillota</taxon>
        <taxon>Bacilli</taxon>
        <taxon>Lactobacillales</taxon>
        <taxon>Streptococcaceae</taxon>
        <taxon>Streptococcus</taxon>
    </lineage>
</organism>
<sequence>MKIADKTVTRAILERHGFTFKKLFGQNFLTDTNILQKIVDTAEIDKTVNVIEIGPGIGALTEFLAENAAEVMAFEIDDRLVPILADTLRDFDNIKVVNEDILKSDLQTRIKEFANPDLPIKVVANLPYYITTPILMHLIESKIPFAEFVVMMQKEVADRISAQPSTKAYGSLSIAVQYYMTAKIAFIVPRTVFVPAPNVDSAILKMTRREQPLVQVQDEDFFFCVGKAAFVHRRKTLWNNLTSHFGKSEEVKVKLEQALEAADIKPSIRGEELTITDFARLADALREVDLK</sequence>